<evidence type="ECO:0000250" key="1"/>
<evidence type="ECO:0000255" key="2">
    <source>
        <dbReference type="PROSITE-ProRule" id="PRU00058"/>
    </source>
</evidence>
<evidence type="ECO:0000255" key="3">
    <source>
        <dbReference type="PROSITE-ProRule" id="PRU00126"/>
    </source>
</evidence>
<evidence type="ECO:0000255" key="4">
    <source>
        <dbReference type="PROSITE-ProRule" id="PRU01215"/>
    </source>
</evidence>
<evidence type="ECO:0000256" key="5">
    <source>
        <dbReference type="SAM" id="MobiDB-lite"/>
    </source>
</evidence>
<evidence type="ECO:0000305" key="6"/>
<dbReference type="EMBL" id="CR382131">
    <property type="protein sequence ID" value="CAG80181.1"/>
    <property type="molecule type" value="Genomic_DNA"/>
</dbReference>
<dbReference type="RefSeq" id="XP_504577.1">
    <property type="nucleotide sequence ID" value="XM_504577.1"/>
</dbReference>
<dbReference type="SMR" id="Q6C435"/>
<dbReference type="FunCoup" id="Q6C435">
    <property type="interactions" value="922"/>
</dbReference>
<dbReference type="STRING" id="284591.Q6C435"/>
<dbReference type="EnsemblFungi" id="CAG80181">
    <property type="protein sequence ID" value="CAG80181"/>
    <property type="gene ID" value="YALI0_E30085g"/>
</dbReference>
<dbReference type="KEGG" id="yli:2911468"/>
<dbReference type="VEuPathDB" id="FungiDB:YALI0_E30085g"/>
<dbReference type="HOGENOM" id="CLU_027445_2_0_1"/>
<dbReference type="InParanoid" id="Q6C435"/>
<dbReference type="OMA" id="YARRSEN"/>
<dbReference type="OrthoDB" id="123870at4891"/>
<dbReference type="Proteomes" id="UP000001300">
    <property type="component" value="Chromosome E"/>
</dbReference>
<dbReference type="GO" id="GO:0005737">
    <property type="term" value="C:cytoplasm"/>
    <property type="evidence" value="ECO:0000318"/>
    <property type="project" value="GO_Central"/>
</dbReference>
<dbReference type="GO" id="GO:0034657">
    <property type="term" value="C:GID complex"/>
    <property type="evidence" value="ECO:0000318"/>
    <property type="project" value="GO_Central"/>
</dbReference>
<dbReference type="GO" id="GO:0005634">
    <property type="term" value="C:nucleus"/>
    <property type="evidence" value="ECO:0000318"/>
    <property type="project" value="GO_Central"/>
</dbReference>
<dbReference type="GO" id="GO:0061630">
    <property type="term" value="F:ubiquitin protein ligase activity"/>
    <property type="evidence" value="ECO:0007669"/>
    <property type="project" value="InterPro"/>
</dbReference>
<dbReference type="GO" id="GO:0008270">
    <property type="term" value="F:zinc ion binding"/>
    <property type="evidence" value="ECO:0007669"/>
    <property type="project" value="UniProtKB-KW"/>
</dbReference>
<dbReference type="GO" id="GO:0045721">
    <property type="term" value="P:negative regulation of gluconeogenesis"/>
    <property type="evidence" value="ECO:0007669"/>
    <property type="project" value="UniProtKB-ARBA"/>
</dbReference>
<dbReference type="GO" id="GO:0043161">
    <property type="term" value="P:proteasome-mediated ubiquitin-dependent protein catabolic process"/>
    <property type="evidence" value="ECO:0000318"/>
    <property type="project" value="GO_Central"/>
</dbReference>
<dbReference type="InterPro" id="IPR013144">
    <property type="entry name" value="CRA_dom"/>
</dbReference>
<dbReference type="InterPro" id="IPR024964">
    <property type="entry name" value="CTLH/CRA"/>
</dbReference>
<dbReference type="InterPro" id="IPR006595">
    <property type="entry name" value="CTLH_C"/>
</dbReference>
<dbReference type="InterPro" id="IPR045098">
    <property type="entry name" value="Fyv10_fam"/>
</dbReference>
<dbReference type="InterPro" id="IPR006594">
    <property type="entry name" value="LisH"/>
</dbReference>
<dbReference type="InterPro" id="IPR044063">
    <property type="entry name" value="ZF_RING_GID"/>
</dbReference>
<dbReference type="PANTHER" id="PTHR12170:SF2">
    <property type="entry name" value="E3 UBIQUITIN-PROTEIN TRANSFERASE MAEA"/>
    <property type="match status" value="1"/>
</dbReference>
<dbReference type="PANTHER" id="PTHR12170">
    <property type="entry name" value="MACROPHAGE ERYTHROBLAST ATTACHER-RELATED"/>
    <property type="match status" value="1"/>
</dbReference>
<dbReference type="Pfam" id="PF10607">
    <property type="entry name" value="CTLH"/>
    <property type="match status" value="1"/>
</dbReference>
<dbReference type="SMART" id="SM00757">
    <property type="entry name" value="CRA"/>
    <property type="match status" value="1"/>
</dbReference>
<dbReference type="SMART" id="SM00668">
    <property type="entry name" value="CTLH"/>
    <property type="match status" value="1"/>
</dbReference>
<dbReference type="PROSITE" id="PS50897">
    <property type="entry name" value="CTLH"/>
    <property type="match status" value="1"/>
</dbReference>
<dbReference type="PROSITE" id="PS50896">
    <property type="entry name" value="LISH"/>
    <property type="match status" value="1"/>
</dbReference>
<dbReference type="PROSITE" id="PS51867">
    <property type="entry name" value="ZF_RING_GID"/>
    <property type="match status" value="1"/>
</dbReference>
<name>FYV10_YARLI</name>
<reference key="1">
    <citation type="journal article" date="2004" name="Nature">
        <title>Genome evolution in yeasts.</title>
        <authorList>
            <person name="Dujon B."/>
            <person name="Sherman D."/>
            <person name="Fischer G."/>
            <person name="Durrens P."/>
            <person name="Casaregola S."/>
            <person name="Lafontaine I."/>
            <person name="de Montigny J."/>
            <person name="Marck C."/>
            <person name="Neuveglise C."/>
            <person name="Talla E."/>
            <person name="Goffard N."/>
            <person name="Frangeul L."/>
            <person name="Aigle M."/>
            <person name="Anthouard V."/>
            <person name="Babour A."/>
            <person name="Barbe V."/>
            <person name="Barnay S."/>
            <person name="Blanchin S."/>
            <person name="Beckerich J.-M."/>
            <person name="Beyne E."/>
            <person name="Bleykasten C."/>
            <person name="Boisrame A."/>
            <person name="Boyer J."/>
            <person name="Cattolico L."/>
            <person name="Confanioleri F."/>
            <person name="de Daruvar A."/>
            <person name="Despons L."/>
            <person name="Fabre E."/>
            <person name="Fairhead C."/>
            <person name="Ferry-Dumazet H."/>
            <person name="Groppi A."/>
            <person name="Hantraye F."/>
            <person name="Hennequin C."/>
            <person name="Jauniaux N."/>
            <person name="Joyet P."/>
            <person name="Kachouri R."/>
            <person name="Kerrest A."/>
            <person name="Koszul R."/>
            <person name="Lemaire M."/>
            <person name="Lesur I."/>
            <person name="Ma L."/>
            <person name="Muller H."/>
            <person name="Nicaud J.-M."/>
            <person name="Nikolski M."/>
            <person name="Oztas S."/>
            <person name="Ozier-Kalogeropoulos O."/>
            <person name="Pellenz S."/>
            <person name="Potier S."/>
            <person name="Richard G.-F."/>
            <person name="Straub M.-L."/>
            <person name="Suleau A."/>
            <person name="Swennen D."/>
            <person name="Tekaia F."/>
            <person name="Wesolowski-Louvel M."/>
            <person name="Westhof E."/>
            <person name="Wirth B."/>
            <person name="Zeniou-Meyer M."/>
            <person name="Zivanovic Y."/>
            <person name="Bolotin-Fukuhara M."/>
            <person name="Thierry A."/>
            <person name="Bouchier C."/>
            <person name="Caudron B."/>
            <person name="Scarpelli C."/>
            <person name="Gaillardin C."/>
            <person name="Weissenbach J."/>
            <person name="Wincker P."/>
            <person name="Souciet J.-L."/>
        </authorList>
    </citation>
    <scope>NUCLEOTIDE SEQUENCE [LARGE SCALE GENOMIC DNA]</scope>
    <source>
        <strain>CLIB 122 / E 150</strain>
    </source>
</reference>
<sequence>MIKADNALLLEEPLLRVPYEMLRKNLKTVHKHMTQESTMVEQTLSKLQQSTQHVAAEYGEKQQEEARESLDQLISRVRGLKRKIATLKDEQNETLTTTKARVEHLNVIFDNEKETDPEKQKETEKKWLRTRLERLLTDYFLRQGFSETAKSFAQNRGITSLVDVTILDQCISVETSLRQRHSTAECLAWCSENRSFLRKTRSSLEFEVRLQHYVELVKSGRVEDALKYCQRFLSKNADIHLREIQQAAGLLAFPPGTEGSPYKDLYACERWNQLSRKFVQTFADVHGLSDGSSLLYTLSTGLSVLKTHSCRNFGAPAELPITADKDEDMDPSLTSSARPYARRSENLPSVFGSGFSIRMYGSDEIRGLDTLPVIPPRALANLSSMRRDIAMQNNLDLEESIEDDNEESEERTSGDGERDSDGAVPVEELEELPDAPPELLSAEYLARRIEEATKENTDIIPKTTLDMFNHFYPGCCTSHQLSRADACPVCSVELNSLAENLPYAHHIRSHLDADPVVLPNSRIFGRAKLMEYSHKMMKAAPNTVVDPTSFECFKIDELITAYPS</sequence>
<feature type="chain" id="PRO_0000292467" description="Protein FYV10">
    <location>
        <begin position="1"/>
        <end position="564"/>
    </location>
</feature>
<feature type="domain" description="LisH" evidence="3">
    <location>
        <begin position="128"/>
        <end position="160"/>
    </location>
</feature>
<feature type="domain" description="CTLH" evidence="2">
    <location>
        <begin position="166"/>
        <end position="224"/>
    </location>
</feature>
<feature type="zinc finger region" description="RING-Gid-type" evidence="4">
    <location>
        <begin position="487"/>
        <end position="549"/>
    </location>
</feature>
<feature type="region of interest" description="Disordered" evidence="5">
    <location>
        <begin position="322"/>
        <end position="341"/>
    </location>
</feature>
<feature type="region of interest" description="Disordered" evidence="5">
    <location>
        <begin position="396"/>
        <end position="422"/>
    </location>
</feature>
<feature type="compositionally biased region" description="Acidic residues" evidence="5">
    <location>
        <begin position="396"/>
        <end position="409"/>
    </location>
</feature>
<feature type="compositionally biased region" description="Basic and acidic residues" evidence="5">
    <location>
        <begin position="410"/>
        <end position="421"/>
    </location>
</feature>
<proteinExistence type="inferred from homology"/>
<comment type="function">
    <text evidence="1">Involved in the proteasome-dependent degradation of fructose-1,6-bisphosphatase.</text>
</comment>
<comment type="subcellular location">
    <subcellularLocation>
        <location evidence="1">Cytoplasm</location>
    </subcellularLocation>
    <subcellularLocation>
        <location evidence="1">Nucleus</location>
    </subcellularLocation>
</comment>
<comment type="similarity">
    <text evidence="6">Belongs to the FYV10 family.</text>
</comment>
<gene>
    <name type="primary">FYV10</name>
    <name type="ordered locus">YALI0E30085g</name>
</gene>
<protein>
    <recommendedName>
        <fullName>Protein FYV10</fullName>
    </recommendedName>
</protein>
<keyword id="KW-0963">Cytoplasm</keyword>
<keyword id="KW-0479">Metal-binding</keyword>
<keyword id="KW-0539">Nucleus</keyword>
<keyword id="KW-1185">Reference proteome</keyword>
<keyword id="KW-0862">Zinc</keyword>
<keyword id="KW-0863">Zinc-finger</keyword>
<accession>Q6C435</accession>
<organism>
    <name type="scientific">Yarrowia lipolytica (strain CLIB 122 / E 150)</name>
    <name type="common">Yeast</name>
    <name type="synonym">Candida lipolytica</name>
    <dbReference type="NCBI Taxonomy" id="284591"/>
    <lineage>
        <taxon>Eukaryota</taxon>
        <taxon>Fungi</taxon>
        <taxon>Dikarya</taxon>
        <taxon>Ascomycota</taxon>
        <taxon>Saccharomycotina</taxon>
        <taxon>Dipodascomycetes</taxon>
        <taxon>Dipodascales</taxon>
        <taxon>Dipodascales incertae sedis</taxon>
        <taxon>Yarrowia</taxon>
    </lineage>
</organism>